<feature type="chain" id="PRO_5000101519" description="Urease accessory protein UreF">
    <location>
        <begin position="1"/>
        <end position="226"/>
    </location>
</feature>
<keyword id="KW-0143">Chaperone</keyword>
<keyword id="KW-0963">Cytoplasm</keyword>
<keyword id="KW-0996">Nickel insertion</keyword>
<keyword id="KW-1185">Reference proteome</keyword>
<gene>
    <name evidence="1" type="primary">ureF</name>
    <name type="ordered locus">Nmul_A1243</name>
</gene>
<name>UREF_NITMU</name>
<reference key="1">
    <citation type="submission" date="2005-08" db="EMBL/GenBank/DDBJ databases">
        <title>Complete sequence of chromosome 1 of Nitrosospira multiformis ATCC 25196.</title>
        <authorList>
            <person name="Copeland A."/>
            <person name="Lucas S."/>
            <person name="Lapidus A."/>
            <person name="Barry K."/>
            <person name="Detter J.C."/>
            <person name="Glavina T."/>
            <person name="Hammon N."/>
            <person name="Israni S."/>
            <person name="Pitluck S."/>
            <person name="Chain P."/>
            <person name="Malfatti S."/>
            <person name="Shin M."/>
            <person name="Vergez L."/>
            <person name="Schmutz J."/>
            <person name="Larimer F."/>
            <person name="Land M."/>
            <person name="Hauser L."/>
            <person name="Kyrpides N."/>
            <person name="Lykidis A."/>
            <person name="Richardson P."/>
        </authorList>
    </citation>
    <scope>NUCLEOTIDE SEQUENCE [LARGE SCALE GENOMIC DNA]</scope>
    <source>
        <strain>ATCC 25196 / NCIMB 11849 / C 71</strain>
    </source>
</reference>
<dbReference type="EMBL" id="CP000103">
    <property type="protein sequence ID" value="ABB74546.1"/>
    <property type="molecule type" value="Genomic_DNA"/>
</dbReference>
<dbReference type="RefSeq" id="WP_011380587.1">
    <property type="nucleotide sequence ID" value="NC_007614.1"/>
</dbReference>
<dbReference type="SMR" id="Q2Y9M5"/>
<dbReference type="STRING" id="323848.Nmul_A1243"/>
<dbReference type="KEGG" id="nmu:Nmul_A1243"/>
<dbReference type="eggNOG" id="COG0830">
    <property type="taxonomic scope" value="Bacteria"/>
</dbReference>
<dbReference type="HOGENOM" id="CLU_049215_2_1_4"/>
<dbReference type="OrthoDB" id="9798772at2"/>
<dbReference type="Proteomes" id="UP000002718">
    <property type="component" value="Chromosome"/>
</dbReference>
<dbReference type="GO" id="GO:0005737">
    <property type="term" value="C:cytoplasm"/>
    <property type="evidence" value="ECO:0007669"/>
    <property type="project" value="UniProtKB-SubCell"/>
</dbReference>
<dbReference type="GO" id="GO:0016151">
    <property type="term" value="F:nickel cation binding"/>
    <property type="evidence" value="ECO:0007669"/>
    <property type="project" value="UniProtKB-UniRule"/>
</dbReference>
<dbReference type="Gene3D" id="1.10.4190.10">
    <property type="entry name" value="Urease accessory protein UreF"/>
    <property type="match status" value="1"/>
</dbReference>
<dbReference type="HAMAP" id="MF_01385">
    <property type="entry name" value="UreF"/>
    <property type="match status" value="1"/>
</dbReference>
<dbReference type="InterPro" id="IPR002639">
    <property type="entry name" value="UreF"/>
</dbReference>
<dbReference type="InterPro" id="IPR038277">
    <property type="entry name" value="UreF_sf"/>
</dbReference>
<dbReference type="PANTHER" id="PTHR33620">
    <property type="entry name" value="UREASE ACCESSORY PROTEIN F"/>
    <property type="match status" value="1"/>
</dbReference>
<dbReference type="PANTHER" id="PTHR33620:SF1">
    <property type="entry name" value="UREASE ACCESSORY PROTEIN F"/>
    <property type="match status" value="1"/>
</dbReference>
<dbReference type="Pfam" id="PF01730">
    <property type="entry name" value="UreF"/>
    <property type="match status" value="1"/>
</dbReference>
<dbReference type="PIRSF" id="PIRSF009467">
    <property type="entry name" value="Ureas_acces_UreF"/>
    <property type="match status" value="1"/>
</dbReference>
<accession>Q2Y9M5</accession>
<comment type="function">
    <text evidence="1">Required for maturation of urease via the functional incorporation of the urease nickel metallocenter.</text>
</comment>
<comment type="subunit">
    <text evidence="1">UreD, UreF and UreG form a complex that acts as a GTP-hydrolysis-dependent molecular chaperone, activating the urease apoprotein by helping to assemble the nickel containing metallocenter of UreC. The UreE protein probably delivers the nickel.</text>
</comment>
<comment type="subcellular location">
    <subcellularLocation>
        <location evidence="1">Cytoplasm</location>
    </subcellularLocation>
</comment>
<comment type="similarity">
    <text evidence="1">Belongs to the UreF family.</text>
</comment>
<evidence type="ECO:0000255" key="1">
    <source>
        <dbReference type="HAMAP-Rule" id="MF_01385"/>
    </source>
</evidence>
<sequence>MKEYRALLALLHLASPSLPIGAYTYSQGLESAIEQGLVRDETSAREWLVEMLGIFTDFELPILQRLLKAFSERDEAAVSFWTECFVASRETSEFRAETVQMGYSLAKLVIDLKLGDDSMRAILENQQAIPLPTAFACAAEALGIPHEESLLGMLFSMAENQVLACVKSVPLGQLSGQRLLLSLHPVIEACSIRASQLTDDELSSWAPGLSLLSMQHEVQYSRIYRS</sequence>
<proteinExistence type="inferred from homology"/>
<organism>
    <name type="scientific">Nitrosospira multiformis (strain ATCC 25196 / NCIMB 11849 / C 71)</name>
    <dbReference type="NCBI Taxonomy" id="323848"/>
    <lineage>
        <taxon>Bacteria</taxon>
        <taxon>Pseudomonadati</taxon>
        <taxon>Pseudomonadota</taxon>
        <taxon>Betaproteobacteria</taxon>
        <taxon>Nitrosomonadales</taxon>
        <taxon>Nitrosomonadaceae</taxon>
        <taxon>Nitrosospira</taxon>
    </lineage>
</organism>
<protein>
    <recommendedName>
        <fullName evidence="1">Urease accessory protein UreF</fullName>
    </recommendedName>
</protein>